<accession>Q5HAV4</accession>
<accession>Q5FD47</accession>
<organism>
    <name type="scientific">Ehrlichia ruminantium (strain Welgevonden)</name>
    <dbReference type="NCBI Taxonomy" id="254945"/>
    <lineage>
        <taxon>Bacteria</taxon>
        <taxon>Pseudomonadati</taxon>
        <taxon>Pseudomonadota</taxon>
        <taxon>Alphaproteobacteria</taxon>
        <taxon>Rickettsiales</taxon>
        <taxon>Anaplasmataceae</taxon>
        <taxon>Ehrlichia</taxon>
    </lineage>
</organism>
<protein>
    <recommendedName>
        <fullName evidence="1">4-hydroxy-tetrahydrodipicolinate reductase</fullName>
        <shortName evidence="1">HTPA reductase</shortName>
        <ecNumber evidence="1">1.17.1.8</ecNumber>
    </recommendedName>
</protein>
<gene>
    <name evidence="1" type="primary">dapB</name>
    <name type="ordered locus">Erum5770</name>
    <name type="ordered locus">ERWE_CDS_06060</name>
</gene>
<sequence>MNKVKVGIVGCLGRQGRHLVSEISASDIAEVSAGLVRIGSEYVGKVLGVVIGCNCDAKITDSLEHLFDVSDVVIEFTNPNTMIECMKMAELKKKPMVSGTTGISEDMVFQDYIKSVPFLWSANLSFSMNILLKLVEDATRMLSGYDVEIWEIHHRYKKDSPSGTSLMLGKAAARGMNVQFRMNQYIKGGQESRQDNKSIGYAVSRGGVGLSDHKIIFAGDEDVIEFSHRATNKNVYAKGALKAALWLIGQPCGIYTMSDMMVTQ</sequence>
<reference key="1">
    <citation type="journal article" date="2005" name="Proc. Natl. Acad. Sci. U.S.A.">
        <title>The genome of the heartwater agent Ehrlichia ruminantium contains multiple tandem repeats of actively variable copy number.</title>
        <authorList>
            <person name="Collins N.E."/>
            <person name="Liebenberg J."/>
            <person name="de Villiers E.P."/>
            <person name="Brayton K.A."/>
            <person name="Louw E."/>
            <person name="Pretorius A."/>
            <person name="Faber F.E."/>
            <person name="van Heerden H."/>
            <person name="Josemans A."/>
            <person name="van Kleef M."/>
            <person name="Steyn H.C."/>
            <person name="van Strijp M.F."/>
            <person name="Zweygarth E."/>
            <person name="Jongejan F."/>
            <person name="Maillard J.C."/>
            <person name="Berthier D."/>
            <person name="Botha M."/>
            <person name="Joubert F."/>
            <person name="Corton C.H."/>
            <person name="Thomson N.R."/>
            <person name="Allsopp M.T."/>
            <person name="Allsopp B.A."/>
        </authorList>
    </citation>
    <scope>NUCLEOTIDE SEQUENCE [LARGE SCALE GENOMIC DNA]</scope>
    <source>
        <strain>Welgevonden</strain>
    </source>
</reference>
<reference key="2">
    <citation type="journal article" date="2006" name="J. Bacteriol.">
        <title>Comparative genomic analysis of three strains of Ehrlichia ruminantium reveals an active process of genome size plasticity.</title>
        <authorList>
            <person name="Frutos R."/>
            <person name="Viari A."/>
            <person name="Ferraz C."/>
            <person name="Morgat A."/>
            <person name="Eychenie S."/>
            <person name="Kandassamy Y."/>
            <person name="Chantal I."/>
            <person name="Bensaid A."/>
            <person name="Coissac E."/>
            <person name="Vachiery N."/>
            <person name="Demaille J."/>
            <person name="Martinez D."/>
        </authorList>
    </citation>
    <scope>NUCLEOTIDE SEQUENCE [LARGE SCALE GENOMIC DNA]</scope>
    <source>
        <strain>Welgevonden</strain>
    </source>
</reference>
<dbReference type="EC" id="1.17.1.8" evidence="1"/>
<dbReference type="EMBL" id="CR767821">
    <property type="protein sequence ID" value="CAH58307.1"/>
    <property type="molecule type" value="Genomic_DNA"/>
</dbReference>
<dbReference type="EMBL" id="CR925678">
    <property type="protein sequence ID" value="CAI27100.1"/>
    <property type="molecule type" value="Genomic_DNA"/>
</dbReference>
<dbReference type="RefSeq" id="WP_011155257.1">
    <property type="nucleotide sequence ID" value="NC_005295.2"/>
</dbReference>
<dbReference type="SMR" id="Q5HAV4"/>
<dbReference type="GeneID" id="33058422"/>
<dbReference type="KEGG" id="eru:Erum5770"/>
<dbReference type="KEGG" id="erw:ERWE_CDS_06060"/>
<dbReference type="eggNOG" id="COG0289">
    <property type="taxonomic scope" value="Bacteria"/>
</dbReference>
<dbReference type="HOGENOM" id="CLU_047479_2_1_5"/>
<dbReference type="UniPathway" id="UPA00034">
    <property type="reaction ID" value="UER00018"/>
</dbReference>
<dbReference type="Proteomes" id="UP000001021">
    <property type="component" value="Chromosome"/>
</dbReference>
<dbReference type="GO" id="GO:0005737">
    <property type="term" value="C:cytoplasm"/>
    <property type="evidence" value="ECO:0007669"/>
    <property type="project" value="UniProtKB-SubCell"/>
</dbReference>
<dbReference type="GO" id="GO:0008839">
    <property type="term" value="F:4-hydroxy-tetrahydrodipicolinate reductase"/>
    <property type="evidence" value="ECO:0007669"/>
    <property type="project" value="UniProtKB-EC"/>
</dbReference>
<dbReference type="GO" id="GO:0051287">
    <property type="term" value="F:NAD binding"/>
    <property type="evidence" value="ECO:0007669"/>
    <property type="project" value="UniProtKB-UniRule"/>
</dbReference>
<dbReference type="GO" id="GO:0050661">
    <property type="term" value="F:NADP binding"/>
    <property type="evidence" value="ECO:0007669"/>
    <property type="project" value="UniProtKB-UniRule"/>
</dbReference>
<dbReference type="GO" id="GO:0016726">
    <property type="term" value="F:oxidoreductase activity, acting on CH or CH2 groups, NAD or NADP as acceptor"/>
    <property type="evidence" value="ECO:0007669"/>
    <property type="project" value="UniProtKB-UniRule"/>
</dbReference>
<dbReference type="GO" id="GO:0019877">
    <property type="term" value="P:diaminopimelate biosynthetic process"/>
    <property type="evidence" value="ECO:0007669"/>
    <property type="project" value="UniProtKB-UniRule"/>
</dbReference>
<dbReference type="GO" id="GO:0009089">
    <property type="term" value="P:lysine biosynthetic process via diaminopimelate"/>
    <property type="evidence" value="ECO:0007669"/>
    <property type="project" value="UniProtKB-UniRule"/>
</dbReference>
<dbReference type="CDD" id="cd02274">
    <property type="entry name" value="DHDPR_N"/>
    <property type="match status" value="1"/>
</dbReference>
<dbReference type="Gene3D" id="3.30.360.10">
    <property type="entry name" value="Dihydrodipicolinate Reductase, domain 2"/>
    <property type="match status" value="1"/>
</dbReference>
<dbReference type="Gene3D" id="3.40.50.720">
    <property type="entry name" value="NAD(P)-binding Rossmann-like Domain"/>
    <property type="match status" value="1"/>
</dbReference>
<dbReference type="HAMAP" id="MF_00102">
    <property type="entry name" value="DapB"/>
    <property type="match status" value="1"/>
</dbReference>
<dbReference type="InterPro" id="IPR022663">
    <property type="entry name" value="DapB_C"/>
</dbReference>
<dbReference type="InterPro" id="IPR000846">
    <property type="entry name" value="DapB_N"/>
</dbReference>
<dbReference type="InterPro" id="IPR022664">
    <property type="entry name" value="DapB_N_CS"/>
</dbReference>
<dbReference type="InterPro" id="IPR023940">
    <property type="entry name" value="DHDPR_bac"/>
</dbReference>
<dbReference type="InterPro" id="IPR036291">
    <property type="entry name" value="NAD(P)-bd_dom_sf"/>
</dbReference>
<dbReference type="NCBIfam" id="TIGR00036">
    <property type="entry name" value="dapB"/>
    <property type="match status" value="1"/>
</dbReference>
<dbReference type="PANTHER" id="PTHR20836:SF0">
    <property type="entry name" value="4-HYDROXY-TETRAHYDRODIPICOLINATE REDUCTASE 1, CHLOROPLASTIC-RELATED"/>
    <property type="match status" value="1"/>
</dbReference>
<dbReference type="PANTHER" id="PTHR20836">
    <property type="entry name" value="DIHYDRODIPICOLINATE REDUCTASE"/>
    <property type="match status" value="1"/>
</dbReference>
<dbReference type="Pfam" id="PF05173">
    <property type="entry name" value="DapB_C"/>
    <property type="match status" value="1"/>
</dbReference>
<dbReference type="Pfam" id="PF01113">
    <property type="entry name" value="DapB_N"/>
    <property type="match status" value="1"/>
</dbReference>
<dbReference type="PIRSF" id="PIRSF000161">
    <property type="entry name" value="DHPR"/>
    <property type="match status" value="1"/>
</dbReference>
<dbReference type="SUPFAM" id="SSF55347">
    <property type="entry name" value="Glyceraldehyde-3-phosphate dehydrogenase-like, C-terminal domain"/>
    <property type="match status" value="1"/>
</dbReference>
<dbReference type="SUPFAM" id="SSF51735">
    <property type="entry name" value="NAD(P)-binding Rossmann-fold domains"/>
    <property type="match status" value="1"/>
</dbReference>
<dbReference type="PROSITE" id="PS01298">
    <property type="entry name" value="DAPB"/>
    <property type="match status" value="1"/>
</dbReference>
<name>DAPB_EHRRW</name>
<feature type="chain" id="PRO_0000228349" description="4-hydroxy-tetrahydrodipicolinate reductase">
    <location>
        <begin position="1"/>
        <end position="264"/>
    </location>
</feature>
<feature type="active site" description="Proton donor/acceptor" evidence="1">
    <location>
        <position position="153"/>
    </location>
</feature>
<feature type="active site" description="Proton donor" evidence="1">
    <location>
        <position position="157"/>
    </location>
</feature>
<feature type="binding site" evidence="1">
    <location>
        <begin position="10"/>
        <end position="15"/>
    </location>
    <ligand>
        <name>NAD(+)</name>
        <dbReference type="ChEBI" id="CHEBI:57540"/>
    </ligand>
</feature>
<feature type="binding site" evidence="1">
    <location>
        <position position="37"/>
    </location>
    <ligand>
        <name>NADP(+)</name>
        <dbReference type="ChEBI" id="CHEBI:58349"/>
    </ligand>
</feature>
<feature type="binding site" evidence="1">
    <location>
        <begin position="99"/>
        <end position="101"/>
    </location>
    <ligand>
        <name>NAD(+)</name>
        <dbReference type="ChEBI" id="CHEBI:57540"/>
    </ligand>
</feature>
<feature type="binding site" evidence="1">
    <location>
        <begin position="121"/>
        <end position="124"/>
    </location>
    <ligand>
        <name>NAD(+)</name>
        <dbReference type="ChEBI" id="CHEBI:57540"/>
    </ligand>
</feature>
<feature type="binding site" evidence="1">
    <location>
        <position position="154"/>
    </location>
    <ligand>
        <name>(S)-2,3,4,5-tetrahydrodipicolinate</name>
        <dbReference type="ChEBI" id="CHEBI:16845"/>
    </ligand>
</feature>
<feature type="binding site" evidence="1">
    <location>
        <begin position="163"/>
        <end position="164"/>
    </location>
    <ligand>
        <name>(S)-2,3,4,5-tetrahydrodipicolinate</name>
        <dbReference type="ChEBI" id="CHEBI:16845"/>
    </ligand>
</feature>
<keyword id="KW-0028">Amino-acid biosynthesis</keyword>
<keyword id="KW-0963">Cytoplasm</keyword>
<keyword id="KW-0220">Diaminopimelate biosynthesis</keyword>
<keyword id="KW-0457">Lysine biosynthesis</keyword>
<keyword id="KW-0520">NAD</keyword>
<keyword id="KW-0521">NADP</keyword>
<keyword id="KW-0560">Oxidoreductase</keyword>
<comment type="function">
    <text evidence="1">Catalyzes the conversion of 4-hydroxy-tetrahydrodipicolinate (HTPA) to tetrahydrodipicolinate.</text>
</comment>
<comment type="catalytic activity">
    <reaction evidence="1">
        <text>(S)-2,3,4,5-tetrahydrodipicolinate + NAD(+) + H2O = (2S,4S)-4-hydroxy-2,3,4,5-tetrahydrodipicolinate + NADH + H(+)</text>
        <dbReference type="Rhea" id="RHEA:35323"/>
        <dbReference type="ChEBI" id="CHEBI:15377"/>
        <dbReference type="ChEBI" id="CHEBI:15378"/>
        <dbReference type="ChEBI" id="CHEBI:16845"/>
        <dbReference type="ChEBI" id="CHEBI:57540"/>
        <dbReference type="ChEBI" id="CHEBI:57945"/>
        <dbReference type="ChEBI" id="CHEBI:67139"/>
        <dbReference type="EC" id="1.17.1.8"/>
    </reaction>
</comment>
<comment type="catalytic activity">
    <reaction evidence="1">
        <text>(S)-2,3,4,5-tetrahydrodipicolinate + NADP(+) + H2O = (2S,4S)-4-hydroxy-2,3,4,5-tetrahydrodipicolinate + NADPH + H(+)</text>
        <dbReference type="Rhea" id="RHEA:35331"/>
        <dbReference type="ChEBI" id="CHEBI:15377"/>
        <dbReference type="ChEBI" id="CHEBI:15378"/>
        <dbReference type="ChEBI" id="CHEBI:16845"/>
        <dbReference type="ChEBI" id="CHEBI:57783"/>
        <dbReference type="ChEBI" id="CHEBI:58349"/>
        <dbReference type="ChEBI" id="CHEBI:67139"/>
        <dbReference type="EC" id="1.17.1.8"/>
    </reaction>
</comment>
<comment type="pathway">
    <text evidence="1">Amino-acid biosynthesis; L-lysine biosynthesis via DAP pathway; (S)-tetrahydrodipicolinate from L-aspartate: step 4/4.</text>
</comment>
<comment type="subcellular location">
    <subcellularLocation>
        <location evidence="1">Cytoplasm</location>
    </subcellularLocation>
</comment>
<comment type="similarity">
    <text evidence="1">Belongs to the DapB family.</text>
</comment>
<comment type="caution">
    <text evidence="2">Was originally thought to be a dihydrodipicolinate reductase (DHDPR), catalyzing the conversion of dihydrodipicolinate to tetrahydrodipicolinate. However, it was shown in E.coli that the substrate of the enzymatic reaction is not dihydrodipicolinate (DHDP) but in fact (2S,4S)-4-hydroxy-2,3,4,5-tetrahydrodipicolinic acid (HTPA), the product released by the DapA-catalyzed reaction.</text>
</comment>
<evidence type="ECO:0000255" key="1">
    <source>
        <dbReference type="HAMAP-Rule" id="MF_00102"/>
    </source>
</evidence>
<evidence type="ECO:0000305" key="2"/>
<proteinExistence type="inferred from homology"/>